<comment type="function">
    <text evidence="1">Acts as an anti-CsrA protein, binds CsrA and prevents it from repressing translation of its target genes, one of which is flagellin. Binds to flagellin and participates in the assembly of the flagellum.</text>
</comment>
<comment type="subunit">
    <text evidence="1">Interacts with translational regulator CsrA and flagellin(s).</text>
</comment>
<comment type="subcellular location">
    <subcellularLocation>
        <location evidence="1">Cytoplasm</location>
    </subcellularLocation>
</comment>
<comment type="similarity">
    <text evidence="1">Belongs to the FliW family.</text>
</comment>
<organism>
    <name type="scientific">Wolinella succinogenes (strain ATCC 29543 / DSM 1740 / CCUG 13145 / JCM 31913 / LMG 7466 / NCTC 11488 / FDC 602W)</name>
    <name type="common">Vibrio succinogenes</name>
    <dbReference type="NCBI Taxonomy" id="273121"/>
    <lineage>
        <taxon>Bacteria</taxon>
        <taxon>Pseudomonadati</taxon>
        <taxon>Campylobacterota</taxon>
        <taxon>Epsilonproteobacteria</taxon>
        <taxon>Campylobacterales</taxon>
        <taxon>Helicobacteraceae</taxon>
        <taxon>Wolinella</taxon>
    </lineage>
</organism>
<accession>Q7MR59</accession>
<proteinExistence type="inferred from homology"/>
<feature type="chain" id="PRO_0000273015" description="Flagellar assembly factor FliW 1">
    <location>
        <begin position="1"/>
        <end position="128"/>
    </location>
</feature>
<protein>
    <recommendedName>
        <fullName evidence="1">Flagellar assembly factor FliW 1</fullName>
    </recommendedName>
</protein>
<sequence length="128" mass="14595">MVYELKSPLLGFEEIKEFDLVEVDEMFAKIKAINNPSIEITLANPYALREYSFDIPAYIQALLDINAQSKVRVFCTVVIQNPIDESRVNFLAPLIFNDDNQTAAQIALSIKDYPDFSVADKIKNYVKE</sequence>
<name>FLIW1_WOLSU</name>
<gene>
    <name evidence="1" type="primary">fliW1</name>
    <name type="ordered locus">WS1651</name>
</gene>
<keyword id="KW-1005">Bacterial flagellum biogenesis</keyword>
<keyword id="KW-0143">Chaperone</keyword>
<keyword id="KW-0963">Cytoplasm</keyword>
<keyword id="KW-1185">Reference proteome</keyword>
<keyword id="KW-0810">Translation regulation</keyword>
<dbReference type="EMBL" id="BX571661">
    <property type="protein sequence ID" value="CAE10682.1"/>
    <property type="molecule type" value="Genomic_DNA"/>
</dbReference>
<dbReference type="RefSeq" id="WP_011139466.1">
    <property type="nucleotide sequence ID" value="NC_005090.1"/>
</dbReference>
<dbReference type="SMR" id="Q7MR59"/>
<dbReference type="STRING" id="273121.WS1651"/>
<dbReference type="KEGG" id="wsu:WS1651"/>
<dbReference type="eggNOG" id="COG1699">
    <property type="taxonomic scope" value="Bacteria"/>
</dbReference>
<dbReference type="HOGENOM" id="CLU_112356_2_1_7"/>
<dbReference type="Proteomes" id="UP000000422">
    <property type="component" value="Chromosome"/>
</dbReference>
<dbReference type="GO" id="GO:0005737">
    <property type="term" value="C:cytoplasm"/>
    <property type="evidence" value="ECO:0007669"/>
    <property type="project" value="UniProtKB-SubCell"/>
</dbReference>
<dbReference type="GO" id="GO:0044780">
    <property type="term" value="P:bacterial-type flagellum assembly"/>
    <property type="evidence" value="ECO:0007669"/>
    <property type="project" value="UniProtKB-UniRule"/>
</dbReference>
<dbReference type="GO" id="GO:0006417">
    <property type="term" value="P:regulation of translation"/>
    <property type="evidence" value="ECO:0007669"/>
    <property type="project" value="UniProtKB-KW"/>
</dbReference>
<dbReference type="Gene3D" id="2.30.290.10">
    <property type="entry name" value="BH3618-like"/>
    <property type="match status" value="1"/>
</dbReference>
<dbReference type="HAMAP" id="MF_01185">
    <property type="entry name" value="FliW"/>
    <property type="match status" value="1"/>
</dbReference>
<dbReference type="InterPro" id="IPR003775">
    <property type="entry name" value="Flagellar_assembly_factor_FliW"/>
</dbReference>
<dbReference type="InterPro" id="IPR024046">
    <property type="entry name" value="Flagellar_assmbl_FliW_dom_sf"/>
</dbReference>
<dbReference type="NCBIfam" id="NF009790">
    <property type="entry name" value="PRK13282.1"/>
    <property type="match status" value="1"/>
</dbReference>
<dbReference type="NCBIfam" id="NF009791">
    <property type="entry name" value="PRK13283.1"/>
    <property type="match status" value="1"/>
</dbReference>
<dbReference type="PANTHER" id="PTHR39190">
    <property type="entry name" value="FLAGELLAR ASSEMBLY FACTOR FLIW"/>
    <property type="match status" value="1"/>
</dbReference>
<dbReference type="PANTHER" id="PTHR39190:SF1">
    <property type="entry name" value="FLAGELLAR ASSEMBLY FACTOR FLIW"/>
    <property type="match status" value="1"/>
</dbReference>
<dbReference type="Pfam" id="PF02623">
    <property type="entry name" value="FliW"/>
    <property type="match status" value="1"/>
</dbReference>
<dbReference type="SUPFAM" id="SSF141457">
    <property type="entry name" value="BH3618-like"/>
    <property type="match status" value="1"/>
</dbReference>
<reference key="1">
    <citation type="journal article" date="2003" name="Proc. Natl. Acad. Sci. U.S.A.">
        <title>Complete genome sequence and analysis of Wolinella succinogenes.</title>
        <authorList>
            <person name="Baar C."/>
            <person name="Eppinger M."/>
            <person name="Raddatz G."/>
            <person name="Simon J."/>
            <person name="Lanz C."/>
            <person name="Klimmek O."/>
            <person name="Nandakumar R."/>
            <person name="Gross R."/>
            <person name="Rosinus A."/>
            <person name="Keller H."/>
            <person name="Jagtap P."/>
            <person name="Linke B."/>
            <person name="Meyer F."/>
            <person name="Lederer H."/>
            <person name="Schuster S.C."/>
        </authorList>
    </citation>
    <scope>NUCLEOTIDE SEQUENCE [LARGE SCALE GENOMIC DNA]</scope>
    <source>
        <strain>ATCC 29543 / DSM 1740 / CCUG 13145 / JCM 31913 / LMG 7466 / NCTC 11488 / FDC 602W</strain>
    </source>
</reference>
<evidence type="ECO:0000255" key="1">
    <source>
        <dbReference type="HAMAP-Rule" id="MF_01185"/>
    </source>
</evidence>